<comment type="function">
    <text evidence="1">Probable transcription factor involved in plant development.</text>
</comment>
<comment type="subcellular location">
    <subcellularLocation>
        <location evidence="6">Nucleus</location>
    </subcellularLocation>
</comment>
<comment type="tissue specificity">
    <text evidence="4 5">Expressed in seedlings, roots, shoots, leaves, flowers and siliques.</text>
</comment>
<comment type="similarity">
    <text evidence="6">Belongs to the GRAS family.</text>
</comment>
<sequence length="593" mass="66700">MVEQTVVREHIKARVMSLVRSAEPSSYRNPKLYTLNENGNNNGVSSAQIFDPDRSKNPCLTDDSYPSQSYEKYFLDSPTDEFVQHPIGSGASVSSFGSLDSFPYQSRPVLGCSMEFQLPLDSTSTSSTRLLGDYQAVSYSPSMDVVEEFDDEQMRSKIQELERALLGDEDDKMVGIDNLMEIDSEWSYQNESEQHQDSPKESSSADSNSHVSSKEVVSQATPKQILISCARALSEGKLEEALSMVNELRQIVSIQGDPSQRIAAYMVEGLAARMAASGKFIYRALKCKEPPSDERLAAMQVLFEVCPCFKFGFLAANGAILEAIKGEEEVHIIDFDINQGNQYMTLIRSIAELPGKRPRLRLTGIDDPESVQRSIGGLRIIGLRLEQLAEDNGVSFKFKAMPSKTSIVSPSTLGCKPGETLIVNFAFQLHHMPDESVTTVNQRDELLHMVKSLNPKLVTVVEQDVNTNTSPFFPRFIEAYEYYSAVFESLDMTLPRESQERMNVERQCLARDIVNIVACEGEERIERYEAAGKWRARMMMAGFNPKPMSAKVTNNIQNLIKQQYCNKYKLKEEMGELHFCWEEKSLIVASAWR</sequence>
<name>SCL1_ARATH</name>
<keyword id="KW-0539">Nucleus</keyword>
<keyword id="KW-1185">Reference proteome</keyword>
<keyword id="KW-0804">Transcription</keyword>
<keyword id="KW-0805">Transcription regulation</keyword>
<gene>
    <name type="primary">SCL1</name>
    <name type="ordered locus">At1g21450</name>
    <name type="ORF">F24J8.8</name>
</gene>
<evidence type="ECO:0000250" key="1"/>
<evidence type="ECO:0000255" key="2">
    <source>
        <dbReference type="PROSITE-ProRule" id="PRU01191"/>
    </source>
</evidence>
<evidence type="ECO:0000256" key="3">
    <source>
        <dbReference type="SAM" id="MobiDB-lite"/>
    </source>
</evidence>
<evidence type="ECO:0000269" key="4">
    <source>
    </source>
</evidence>
<evidence type="ECO:0000269" key="5">
    <source>
    </source>
</evidence>
<evidence type="ECO:0000305" key="6"/>
<reference key="1">
    <citation type="journal article" date="2000" name="Genes Dev.">
        <title>PAT1, a new member of the GRAS family, is involved in phytochrome A signal transduction.</title>
        <authorList>
            <person name="Bolle C."/>
            <person name="Koncz C."/>
            <person name="Chua N.-H."/>
        </authorList>
    </citation>
    <scope>NUCLEOTIDE SEQUENCE [MRNA]</scope>
    <source>
        <strain>cv. Columbia</strain>
    </source>
</reference>
<reference key="2">
    <citation type="journal article" date="2000" name="Nature">
        <title>Sequence and analysis of chromosome 1 of the plant Arabidopsis thaliana.</title>
        <authorList>
            <person name="Theologis A."/>
            <person name="Ecker J.R."/>
            <person name="Palm C.J."/>
            <person name="Federspiel N.A."/>
            <person name="Kaul S."/>
            <person name="White O."/>
            <person name="Alonso J."/>
            <person name="Altafi H."/>
            <person name="Araujo R."/>
            <person name="Bowman C.L."/>
            <person name="Brooks S.Y."/>
            <person name="Buehler E."/>
            <person name="Chan A."/>
            <person name="Chao Q."/>
            <person name="Chen H."/>
            <person name="Cheuk R.F."/>
            <person name="Chin C.W."/>
            <person name="Chung M.K."/>
            <person name="Conn L."/>
            <person name="Conway A.B."/>
            <person name="Conway A.R."/>
            <person name="Creasy T.H."/>
            <person name="Dewar K."/>
            <person name="Dunn P."/>
            <person name="Etgu P."/>
            <person name="Feldblyum T.V."/>
            <person name="Feng J.-D."/>
            <person name="Fong B."/>
            <person name="Fujii C.Y."/>
            <person name="Gill J.E."/>
            <person name="Goldsmith A.D."/>
            <person name="Haas B."/>
            <person name="Hansen N.F."/>
            <person name="Hughes B."/>
            <person name="Huizar L."/>
            <person name="Hunter J.L."/>
            <person name="Jenkins J."/>
            <person name="Johnson-Hopson C."/>
            <person name="Khan S."/>
            <person name="Khaykin E."/>
            <person name="Kim C.J."/>
            <person name="Koo H.L."/>
            <person name="Kremenetskaia I."/>
            <person name="Kurtz D.B."/>
            <person name="Kwan A."/>
            <person name="Lam B."/>
            <person name="Langin-Hooper S."/>
            <person name="Lee A."/>
            <person name="Lee J.M."/>
            <person name="Lenz C.A."/>
            <person name="Li J.H."/>
            <person name="Li Y.-P."/>
            <person name="Lin X."/>
            <person name="Liu S.X."/>
            <person name="Liu Z.A."/>
            <person name="Luros J.S."/>
            <person name="Maiti R."/>
            <person name="Marziali A."/>
            <person name="Militscher J."/>
            <person name="Miranda M."/>
            <person name="Nguyen M."/>
            <person name="Nierman W.C."/>
            <person name="Osborne B.I."/>
            <person name="Pai G."/>
            <person name="Peterson J."/>
            <person name="Pham P.K."/>
            <person name="Rizzo M."/>
            <person name="Rooney T."/>
            <person name="Rowley D."/>
            <person name="Sakano H."/>
            <person name="Salzberg S.L."/>
            <person name="Schwartz J.R."/>
            <person name="Shinn P."/>
            <person name="Southwick A.M."/>
            <person name="Sun H."/>
            <person name="Tallon L.J."/>
            <person name="Tambunga G."/>
            <person name="Toriumi M.J."/>
            <person name="Town C.D."/>
            <person name="Utterback T."/>
            <person name="Van Aken S."/>
            <person name="Vaysberg M."/>
            <person name="Vysotskaia V.S."/>
            <person name="Walker M."/>
            <person name="Wu D."/>
            <person name="Yu G."/>
            <person name="Fraser C.M."/>
            <person name="Venter J.C."/>
            <person name="Davis R.W."/>
        </authorList>
    </citation>
    <scope>NUCLEOTIDE SEQUENCE [LARGE SCALE GENOMIC DNA]</scope>
    <source>
        <strain>cv. Columbia</strain>
    </source>
</reference>
<reference key="3">
    <citation type="journal article" date="2017" name="Plant J.">
        <title>Araport11: a complete reannotation of the Arabidopsis thaliana reference genome.</title>
        <authorList>
            <person name="Cheng C.Y."/>
            <person name="Krishnakumar V."/>
            <person name="Chan A.P."/>
            <person name="Thibaud-Nissen F."/>
            <person name="Schobel S."/>
            <person name="Town C.D."/>
        </authorList>
    </citation>
    <scope>GENOME REANNOTATION</scope>
    <source>
        <strain>cv. Columbia</strain>
    </source>
</reference>
<reference key="4">
    <citation type="journal article" date="2003" name="Science">
        <title>Empirical analysis of transcriptional activity in the Arabidopsis genome.</title>
        <authorList>
            <person name="Yamada K."/>
            <person name="Lim J."/>
            <person name="Dale J.M."/>
            <person name="Chen H."/>
            <person name="Shinn P."/>
            <person name="Palm C.J."/>
            <person name="Southwick A.M."/>
            <person name="Wu H.C."/>
            <person name="Kim C.J."/>
            <person name="Nguyen M."/>
            <person name="Pham P.K."/>
            <person name="Cheuk R.F."/>
            <person name="Karlin-Newmann G."/>
            <person name="Liu S.X."/>
            <person name="Lam B."/>
            <person name="Sakano H."/>
            <person name="Wu T."/>
            <person name="Yu G."/>
            <person name="Miranda M."/>
            <person name="Quach H.L."/>
            <person name="Tripp M."/>
            <person name="Chang C.H."/>
            <person name="Lee J.M."/>
            <person name="Toriumi M.J."/>
            <person name="Chan M.M."/>
            <person name="Tang C.C."/>
            <person name="Onodera C.S."/>
            <person name="Deng J.M."/>
            <person name="Akiyama K."/>
            <person name="Ansari Y."/>
            <person name="Arakawa T."/>
            <person name="Banh J."/>
            <person name="Banno F."/>
            <person name="Bowser L."/>
            <person name="Brooks S.Y."/>
            <person name="Carninci P."/>
            <person name="Chao Q."/>
            <person name="Choy N."/>
            <person name="Enju A."/>
            <person name="Goldsmith A.D."/>
            <person name="Gurjal M."/>
            <person name="Hansen N.F."/>
            <person name="Hayashizaki Y."/>
            <person name="Johnson-Hopson C."/>
            <person name="Hsuan V.W."/>
            <person name="Iida K."/>
            <person name="Karnes M."/>
            <person name="Khan S."/>
            <person name="Koesema E."/>
            <person name="Ishida J."/>
            <person name="Jiang P.X."/>
            <person name="Jones T."/>
            <person name="Kawai J."/>
            <person name="Kamiya A."/>
            <person name="Meyers C."/>
            <person name="Nakajima M."/>
            <person name="Narusaka M."/>
            <person name="Seki M."/>
            <person name="Sakurai T."/>
            <person name="Satou M."/>
            <person name="Tamse R."/>
            <person name="Vaysberg M."/>
            <person name="Wallender E.K."/>
            <person name="Wong C."/>
            <person name="Yamamura Y."/>
            <person name="Yuan S."/>
            <person name="Shinozaki K."/>
            <person name="Davis R.W."/>
            <person name="Theologis A."/>
            <person name="Ecker J.R."/>
        </authorList>
    </citation>
    <scope>NUCLEOTIDE SEQUENCE [LARGE SCALE MRNA]</scope>
    <source>
        <strain>cv. Columbia</strain>
    </source>
</reference>
<reference key="5">
    <citation type="submission" date="2002-03" db="EMBL/GenBank/DDBJ databases">
        <title>Full-length cDNA from Arabidopsis thaliana.</title>
        <authorList>
            <person name="Brover V.V."/>
            <person name="Troukhan M.E."/>
            <person name="Alexandrov N.A."/>
            <person name="Lu Y.-P."/>
            <person name="Flavell R.B."/>
            <person name="Feldmann K.A."/>
        </authorList>
    </citation>
    <scope>NUCLEOTIDE SEQUENCE [LARGE SCALE MRNA]</scope>
</reference>
<reference key="6">
    <citation type="journal article" date="1999" name="Plant J.">
        <title>The GRAS gene family in Arabidopsis: sequence characterization and basic expression analysis of the SCARECROW-LIKE genes.</title>
        <authorList>
            <person name="Pysh L.D."/>
            <person name="Wysocka-Diller J.W."/>
            <person name="Camilleri C."/>
            <person name="Bouchez D."/>
            <person name="Benfey P.N."/>
        </authorList>
    </citation>
    <scope>NUCLEOTIDE SEQUENCE [MRNA] OF 242-593</scope>
    <scope>TISSUE SPECIFICITY</scope>
</reference>
<reference key="7">
    <citation type="journal article" date="2004" name="Plant Mol. Biol.">
        <title>Genome-wide analysis of the GRAS gene family in rice and Arabidopsis.</title>
        <authorList>
            <person name="Tian C."/>
            <person name="Wan P."/>
            <person name="Sun S."/>
            <person name="Li J."/>
            <person name="Chen M."/>
        </authorList>
    </citation>
    <scope>GENE FAMILY</scope>
</reference>
<reference key="8">
    <citation type="journal article" date="2008" name="Plant Mol. Biol.">
        <title>Large-scale analysis of the GRAS gene family in Arabidopsis thaliana.</title>
        <authorList>
            <person name="Lee M.-H."/>
            <person name="Kim B."/>
            <person name="Song S.-K."/>
            <person name="Heo J.-O."/>
            <person name="Yu N.-I."/>
            <person name="Lee S.A."/>
            <person name="Kim M."/>
            <person name="Kim D.G."/>
            <person name="Sohn S.O."/>
            <person name="Lim C.E."/>
            <person name="Chang K.S."/>
            <person name="Lee M.M."/>
            <person name="Lim J."/>
        </authorList>
    </citation>
    <scope>GENE FAMILY</scope>
    <scope>TISSUE SPECIFICITY</scope>
</reference>
<feature type="chain" id="PRO_0000350846" description="Scarecrow-like protein 1">
    <location>
        <begin position="1"/>
        <end position="593"/>
    </location>
</feature>
<feature type="domain" description="GRAS" evidence="2">
    <location>
        <begin position="213"/>
        <end position="593"/>
    </location>
</feature>
<feature type="region of interest" description="Disordered" evidence="3">
    <location>
        <begin position="29"/>
        <end position="61"/>
    </location>
</feature>
<feature type="region of interest" description="Disordered" evidence="3">
    <location>
        <begin position="188"/>
        <end position="216"/>
    </location>
</feature>
<feature type="region of interest" description="Leucine repeat I (LRI)" evidence="2">
    <location>
        <begin position="220"/>
        <end position="280"/>
    </location>
</feature>
<feature type="region of interest" description="VHIID" evidence="2">
    <location>
        <begin position="299"/>
        <end position="364"/>
    </location>
</feature>
<feature type="region of interest" description="Leucine repeat II (LRII)" evidence="2">
    <location>
        <begin position="380"/>
        <end position="411"/>
    </location>
</feature>
<feature type="region of interest" description="PFYRE" evidence="2">
    <location>
        <begin position="421"/>
        <end position="515"/>
    </location>
</feature>
<feature type="region of interest" description="SAW" evidence="2">
    <location>
        <begin position="518"/>
        <end position="593"/>
    </location>
</feature>
<feature type="short sequence motif" description="VHIID" evidence="2">
    <location>
        <begin position="330"/>
        <end position="334"/>
    </location>
</feature>
<feature type="compositionally biased region" description="Polar residues" evidence="3">
    <location>
        <begin position="35"/>
        <end position="48"/>
    </location>
</feature>
<feature type="compositionally biased region" description="Low complexity" evidence="3">
    <location>
        <begin position="202"/>
        <end position="211"/>
    </location>
</feature>
<proteinExistence type="evidence at transcript level"/>
<dbReference type="EMBL" id="AF210731">
    <property type="protein sequence ID" value="AAF21043.1"/>
    <property type="molecule type" value="mRNA"/>
</dbReference>
<dbReference type="EMBL" id="AC015447">
    <property type="protein sequence ID" value="AAF87898.1"/>
    <property type="molecule type" value="Genomic_DNA"/>
</dbReference>
<dbReference type="EMBL" id="CP002684">
    <property type="protein sequence ID" value="AEE30103.1"/>
    <property type="molecule type" value="Genomic_DNA"/>
</dbReference>
<dbReference type="EMBL" id="AY045833">
    <property type="protein sequence ID" value="AAK76507.1"/>
    <property type="molecule type" value="mRNA"/>
</dbReference>
<dbReference type="EMBL" id="AY096626">
    <property type="protein sequence ID" value="AAM20276.1"/>
    <property type="molecule type" value="mRNA"/>
</dbReference>
<dbReference type="EMBL" id="AY084492">
    <property type="protein sequence ID" value="AAM61062.1"/>
    <property type="molecule type" value="mRNA"/>
</dbReference>
<dbReference type="EMBL" id="AF036300">
    <property type="protein sequence ID" value="AAD24403.1"/>
    <property type="molecule type" value="mRNA"/>
</dbReference>
<dbReference type="PIR" id="E86347">
    <property type="entry name" value="E86347"/>
</dbReference>
<dbReference type="PIR" id="T51234">
    <property type="entry name" value="T51234"/>
</dbReference>
<dbReference type="RefSeq" id="NP_173566.1">
    <property type="nucleotide sequence ID" value="NM_101996.4"/>
</dbReference>
<dbReference type="SMR" id="Q9SDQ3"/>
<dbReference type="BioGRID" id="23982">
    <property type="interactions" value="3"/>
</dbReference>
<dbReference type="FunCoup" id="Q9SDQ3">
    <property type="interactions" value="1029"/>
</dbReference>
<dbReference type="STRING" id="3702.Q9SDQ3"/>
<dbReference type="PaxDb" id="3702-AT1G21450.1"/>
<dbReference type="ProteomicsDB" id="232803"/>
<dbReference type="EnsemblPlants" id="AT1G21450.1">
    <property type="protein sequence ID" value="AT1G21450.1"/>
    <property type="gene ID" value="AT1G21450"/>
</dbReference>
<dbReference type="GeneID" id="838743"/>
<dbReference type="Gramene" id="AT1G21450.1">
    <property type="protein sequence ID" value="AT1G21450.1"/>
    <property type="gene ID" value="AT1G21450"/>
</dbReference>
<dbReference type="KEGG" id="ath:AT1G21450"/>
<dbReference type="Araport" id="AT1G21450"/>
<dbReference type="TAIR" id="AT1G21450">
    <property type="gene designation" value="SCL1"/>
</dbReference>
<dbReference type="eggNOG" id="ENOG502QPVN">
    <property type="taxonomic scope" value="Eukaryota"/>
</dbReference>
<dbReference type="HOGENOM" id="CLU_011924_6_1_1"/>
<dbReference type="InParanoid" id="Q9SDQ3"/>
<dbReference type="OMA" id="GNPFHQR"/>
<dbReference type="OrthoDB" id="615187at2759"/>
<dbReference type="PhylomeDB" id="Q9SDQ3"/>
<dbReference type="PRO" id="PR:Q9SDQ3"/>
<dbReference type="Proteomes" id="UP000006548">
    <property type="component" value="Chromosome 1"/>
</dbReference>
<dbReference type="ExpressionAtlas" id="Q9SDQ3">
    <property type="expression patterns" value="baseline and differential"/>
</dbReference>
<dbReference type="GO" id="GO:0005634">
    <property type="term" value="C:nucleus"/>
    <property type="evidence" value="ECO:0007669"/>
    <property type="project" value="UniProtKB-SubCell"/>
</dbReference>
<dbReference type="GO" id="GO:0003700">
    <property type="term" value="F:DNA-binding transcription factor activity"/>
    <property type="evidence" value="ECO:0000250"/>
    <property type="project" value="TAIR"/>
</dbReference>
<dbReference type="GO" id="GO:0000976">
    <property type="term" value="F:transcription cis-regulatory region binding"/>
    <property type="evidence" value="ECO:0000353"/>
    <property type="project" value="TAIR"/>
</dbReference>
<dbReference type="GO" id="GO:0006355">
    <property type="term" value="P:regulation of DNA-templated transcription"/>
    <property type="evidence" value="ECO:0000304"/>
    <property type="project" value="TAIR"/>
</dbReference>
<dbReference type="InterPro" id="IPR005202">
    <property type="entry name" value="TF_GRAS"/>
</dbReference>
<dbReference type="PANTHER" id="PTHR31636">
    <property type="entry name" value="OSJNBA0084A10.13 PROTEIN-RELATED"/>
    <property type="match status" value="1"/>
</dbReference>
<dbReference type="Pfam" id="PF03514">
    <property type="entry name" value="GRAS"/>
    <property type="match status" value="1"/>
</dbReference>
<dbReference type="PROSITE" id="PS50985">
    <property type="entry name" value="GRAS"/>
    <property type="match status" value="1"/>
</dbReference>
<accession>Q9SDQ3</accession>
<accession>Q9XE51</accession>
<protein>
    <recommendedName>
        <fullName>Scarecrow-like protein 1</fullName>
        <shortName>AtSCL1</shortName>
    </recommendedName>
    <alternativeName>
        <fullName>GRAS family protein 4</fullName>
        <shortName>AtGRAS-4</shortName>
    </alternativeName>
</protein>
<organism>
    <name type="scientific">Arabidopsis thaliana</name>
    <name type="common">Mouse-ear cress</name>
    <dbReference type="NCBI Taxonomy" id="3702"/>
    <lineage>
        <taxon>Eukaryota</taxon>
        <taxon>Viridiplantae</taxon>
        <taxon>Streptophyta</taxon>
        <taxon>Embryophyta</taxon>
        <taxon>Tracheophyta</taxon>
        <taxon>Spermatophyta</taxon>
        <taxon>Magnoliopsida</taxon>
        <taxon>eudicotyledons</taxon>
        <taxon>Gunneridae</taxon>
        <taxon>Pentapetalae</taxon>
        <taxon>rosids</taxon>
        <taxon>malvids</taxon>
        <taxon>Brassicales</taxon>
        <taxon>Brassicaceae</taxon>
        <taxon>Camelineae</taxon>
        <taxon>Arabidopsis</taxon>
    </lineage>
</organism>